<evidence type="ECO:0000250" key="1"/>
<evidence type="ECO:0000255" key="2">
    <source>
        <dbReference type="HAMAP-Rule" id="MF_01356"/>
    </source>
</evidence>
<evidence type="ECO:0000256" key="3">
    <source>
        <dbReference type="SAM" id="MobiDB-lite"/>
    </source>
</evidence>
<organism>
    <name type="scientific">Brucella canis (strain ATCC 23365 / NCTC 10854 / RM-666)</name>
    <dbReference type="NCBI Taxonomy" id="483179"/>
    <lineage>
        <taxon>Bacteria</taxon>
        <taxon>Pseudomonadati</taxon>
        <taxon>Pseudomonadota</taxon>
        <taxon>Alphaproteobacteria</taxon>
        <taxon>Hyphomicrobiales</taxon>
        <taxon>Brucellaceae</taxon>
        <taxon>Brucella/Ochrobactrum group</taxon>
        <taxon>Brucella</taxon>
    </lineage>
</organism>
<gene>
    <name evidence="2" type="primary">nuoB</name>
    <name type="ordered locus">BCAN_A0818</name>
</gene>
<comment type="function">
    <text evidence="1">NDH-1 shuttles electrons from NADH, via FMN and iron-sulfur (Fe-S) centers, to quinones in the respiratory chain. Couples the redox reaction to proton translocation (for every two electrons transferred, four hydrogen ions are translocated across the cytoplasmic membrane), and thus conserves the redox energy in a proton gradient (By similarity).</text>
</comment>
<comment type="catalytic activity">
    <reaction evidence="2">
        <text>a quinone + NADH + 5 H(+)(in) = a quinol + NAD(+) + 4 H(+)(out)</text>
        <dbReference type="Rhea" id="RHEA:57888"/>
        <dbReference type="ChEBI" id="CHEBI:15378"/>
        <dbReference type="ChEBI" id="CHEBI:24646"/>
        <dbReference type="ChEBI" id="CHEBI:57540"/>
        <dbReference type="ChEBI" id="CHEBI:57945"/>
        <dbReference type="ChEBI" id="CHEBI:132124"/>
    </reaction>
</comment>
<comment type="cofactor">
    <cofactor evidence="2">
        <name>[4Fe-4S] cluster</name>
        <dbReference type="ChEBI" id="CHEBI:49883"/>
    </cofactor>
    <text evidence="2">Binds 1 [4Fe-4S] cluster.</text>
</comment>
<comment type="subunit">
    <text evidence="2">NDH-1 is composed of 14 different subunits. Subunits NuoB, C, D, E, F, and G constitute the peripheral sector of the complex.</text>
</comment>
<comment type="subcellular location">
    <subcellularLocation>
        <location evidence="2">Cell inner membrane</location>
        <topology evidence="2">Peripheral membrane protein</topology>
        <orientation evidence="2">Cytoplasmic side</orientation>
    </subcellularLocation>
</comment>
<comment type="similarity">
    <text evidence="2">Belongs to the complex I 20 kDa subunit family.</text>
</comment>
<dbReference type="EC" id="7.1.1.-" evidence="2"/>
<dbReference type="EMBL" id="CP000872">
    <property type="protein sequence ID" value="ABX61883.1"/>
    <property type="molecule type" value="Genomic_DNA"/>
</dbReference>
<dbReference type="RefSeq" id="WP_002967573.1">
    <property type="nucleotide sequence ID" value="NC_010103.1"/>
</dbReference>
<dbReference type="SMR" id="A9MAI0"/>
<dbReference type="KEGG" id="bcs:BCAN_A0818"/>
<dbReference type="HOGENOM" id="CLU_055737_7_3_5"/>
<dbReference type="PhylomeDB" id="A9MAI0"/>
<dbReference type="Proteomes" id="UP000001385">
    <property type="component" value="Chromosome I"/>
</dbReference>
<dbReference type="GO" id="GO:0005886">
    <property type="term" value="C:plasma membrane"/>
    <property type="evidence" value="ECO:0007669"/>
    <property type="project" value="UniProtKB-SubCell"/>
</dbReference>
<dbReference type="GO" id="GO:0045271">
    <property type="term" value="C:respiratory chain complex I"/>
    <property type="evidence" value="ECO:0007669"/>
    <property type="project" value="TreeGrafter"/>
</dbReference>
<dbReference type="GO" id="GO:0051539">
    <property type="term" value="F:4 iron, 4 sulfur cluster binding"/>
    <property type="evidence" value="ECO:0007669"/>
    <property type="project" value="UniProtKB-KW"/>
</dbReference>
<dbReference type="GO" id="GO:0005506">
    <property type="term" value="F:iron ion binding"/>
    <property type="evidence" value="ECO:0007669"/>
    <property type="project" value="UniProtKB-UniRule"/>
</dbReference>
<dbReference type="GO" id="GO:0008137">
    <property type="term" value="F:NADH dehydrogenase (ubiquinone) activity"/>
    <property type="evidence" value="ECO:0007669"/>
    <property type="project" value="InterPro"/>
</dbReference>
<dbReference type="GO" id="GO:0050136">
    <property type="term" value="F:NADH:ubiquinone reductase (non-electrogenic) activity"/>
    <property type="evidence" value="ECO:0007669"/>
    <property type="project" value="UniProtKB-UniRule"/>
</dbReference>
<dbReference type="GO" id="GO:0048038">
    <property type="term" value="F:quinone binding"/>
    <property type="evidence" value="ECO:0007669"/>
    <property type="project" value="UniProtKB-KW"/>
</dbReference>
<dbReference type="GO" id="GO:0009060">
    <property type="term" value="P:aerobic respiration"/>
    <property type="evidence" value="ECO:0007669"/>
    <property type="project" value="TreeGrafter"/>
</dbReference>
<dbReference type="GO" id="GO:0015990">
    <property type="term" value="P:electron transport coupled proton transport"/>
    <property type="evidence" value="ECO:0007669"/>
    <property type="project" value="TreeGrafter"/>
</dbReference>
<dbReference type="FunFam" id="3.40.50.12280:FF:000001">
    <property type="entry name" value="NADH-quinone oxidoreductase subunit B 2"/>
    <property type="match status" value="1"/>
</dbReference>
<dbReference type="Gene3D" id="3.40.50.12280">
    <property type="match status" value="1"/>
</dbReference>
<dbReference type="HAMAP" id="MF_01356">
    <property type="entry name" value="NDH1_NuoB"/>
    <property type="match status" value="1"/>
</dbReference>
<dbReference type="InterPro" id="IPR006137">
    <property type="entry name" value="NADH_UbQ_OxRdtase-like_20kDa"/>
</dbReference>
<dbReference type="InterPro" id="IPR006138">
    <property type="entry name" value="NADH_UQ_OxRdtase_20Kd_su"/>
</dbReference>
<dbReference type="NCBIfam" id="TIGR01957">
    <property type="entry name" value="nuoB_fam"/>
    <property type="match status" value="1"/>
</dbReference>
<dbReference type="NCBIfam" id="NF005012">
    <property type="entry name" value="PRK06411.1"/>
    <property type="match status" value="1"/>
</dbReference>
<dbReference type="PANTHER" id="PTHR11995">
    <property type="entry name" value="NADH DEHYDROGENASE"/>
    <property type="match status" value="1"/>
</dbReference>
<dbReference type="PANTHER" id="PTHR11995:SF14">
    <property type="entry name" value="NADH DEHYDROGENASE [UBIQUINONE] IRON-SULFUR PROTEIN 7, MITOCHONDRIAL"/>
    <property type="match status" value="1"/>
</dbReference>
<dbReference type="Pfam" id="PF01058">
    <property type="entry name" value="Oxidored_q6"/>
    <property type="match status" value="1"/>
</dbReference>
<dbReference type="SUPFAM" id="SSF56770">
    <property type="entry name" value="HydA/Nqo6-like"/>
    <property type="match status" value="1"/>
</dbReference>
<dbReference type="PROSITE" id="PS01150">
    <property type="entry name" value="COMPLEX1_20K"/>
    <property type="match status" value="1"/>
</dbReference>
<keyword id="KW-0004">4Fe-4S</keyword>
<keyword id="KW-0997">Cell inner membrane</keyword>
<keyword id="KW-1003">Cell membrane</keyword>
<keyword id="KW-0408">Iron</keyword>
<keyword id="KW-0411">Iron-sulfur</keyword>
<keyword id="KW-0472">Membrane</keyword>
<keyword id="KW-0479">Metal-binding</keyword>
<keyword id="KW-0520">NAD</keyword>
<keyword id="KW-0874">Quinone</keyword>
<keyword id="KW-1185">Reference proteome</keyword>
<keyword id="KW-1278">Translocase</keyword>
<keyword id="KW-0813">Transport</keyword>
<keyword id="KW-0830">Ubiquinone</keyword>
<feature type="chain" id="PRO_0000358358" description="NADH-quinone oxidoreductase subunit B">
    <location>
        <begin position="1"/>
        <end position="193"/>
    </location>
</feature>
<feature type="region of interest" description="Disordered" evidence="3">
    <location>
        <begin position="1"/>
        <end position="23"/>
    </location>
</feature>
<feature type="compositionally biased region" description="Polar residues" evidence="3">
    <location>
        <begin position="1"/>
        <end position="11"/>
    </location>
</feature>
<feature type="binding site" evidence="2">
    <location>
        <position position="72"/>
    </location>
    <ligand>
        <name>[4Fe-4S] cluster</name>
        <dbReference type="ChEBI" id="CHEBI:49883"/>
    </ligand>
</feature>
<feature type="binding site" evidence="2">
    <location>
        <position position="73"/>
    </location>
    <ligand>
        <name>[4Fe-4S] cluster</name>
        <dbReference type="ChEBI" id="CHEBI:49883"/>
    </ligand>
</feature>
<feature type="binding site" evidence="2">
    <location>
        <position position="137"/>
    </location>
    <ligand>
        <name>[4Fe-4S] cluster</name>
        <dbReference type="ChEBI" id="CHEBI:49883"/>
    </ligand>
</feature>
<feature type="binding site" evidence="2">
    <location>
        <position position="167"/>
    </location>
    <ligand>
        <name>[4Fe-4S] cluster</name>
        <dbReference type="ChEBI" id="CHEBI:49883"/>
    </ligand>
</feature>
<reference key="1">
    <citation type="submission" date="2007-10" db="EMBL/GenBank/DDBJ databases">
        <title>Brucella canis ATCC 23365 whole genome shotgun sequencing project.</title>
        <authorList>
            <person name="Setubal J.C."/>
            <person name="Bowns C."/>
            <person name="Boyle S."/>
            <person name="Crasta O.R."/>
            <person name="Czar M.J."/>
            <person name="Dharmanolla C."/>
            <person name="Gillespie J.J."/>
            <person name="Kenyon R.W."/>
            <person name="Lu J."/>
            <person name="Mane S."/>
            <person name="Mohapatra S."/>
            <person name="Nagrani S."/>
            <person name="Purkayastha A."/>
            <person name="Rajasimha H.K."/>
            <person name="Shallom J.M."/>
            <person name="Shallom S."/>
            <person name="Shukla M."/>
            <person name="Snyder E.E."/>
            <person name="Sobral B.W."/>
            <person name="Wattam A.R."/>
            <person name="Will R."/>
            <person name="Williams K."/>
            <person name="Yoo H."/>
            <person name="Bruce D."/>
            <person name="Detter C."/>
            <person name="Munk C."/>
            <person name="Brettin T.S."/>
        </authorList>
    </citation>
    <scope>NUCLEOTIDE SEQUENCE [LARGE SCALE GENOMIC DNA]</scope>
    <source>
        <strain>ATCC 23365 / NCTC 10854 / RM-666</strain>
    </source>
</reference>
<protein>
    <recommendedName>
        <fullName evidence="2">NADH-quinone oxidoreductase subunit B</fullName>
        <ecNumber evidence="2">7.1.1.-</ecNumber>
    </recommendedName>
    <alternativeName>
        <fullName evidence="2">NADH dehydrogenase I subunit B</fullName>
    </alternativeName>
    <alternativeName>
        <fullName evidence="2">NDH-1 subunit B</fullName>
    </alternativeName>
</protein>
<proteinExistence type="inferred from homology"/>
<name>NUOB_BRUC2</name>
<sequence>MGLTGTNTTLVAPQPKGILDPRTGKPVGSDDAFFNDLNGELSDKGFIVTSADALITWARTGSLMWMTFGLACCAVEMMHISMPRYDAERFGIAPRASPRQSDVMIVAGTLTNKMAPALRKVYDQMPEPRYVISMGSCANGGGYYHYSYSVVRGCDRVVPVDIYVPGCPPTAEALLYGILLLQKKIRRTGTIER</sequence>
<accession>A9MAI0</accession>